<organism>
    <name type="scientific">Nostoc sp. (strain PCC 7120 / SAG 25.82 / UTEX 2576)</name>
    <dbReference type="NCBI Taxonomy" id="103690"/>
    <lineage>
        <taxon>Bacteria</taxon>
        <taxon>Bacillati</taxon>
        <taxon>Cyanobacteriota</taxon>
        <taxon>Cyanophyceae</taxon>
        <taxon>Nostocales</taxon>
        <taxon>Nostocaceae</taxon>
        <taxon>Nostoc</taxon>
    </lineage>
</organism>
<dbReference type="EC" id="1.1.1.94" evidence="1"/>
<dbReference type="EMBL" id="BA000019">
    <property type="protein sequence ID" value="BAB78059.1"/>
    <property type="molecule type" value="Genomic_DNA"/>
</dbReference>
<dbReference type="PIR" id="AG2017">
    <property type="entry name" value="AG2017"/>
</dbReference>
<dbReference type="RefSeq" id="WP_010995862.1">
    <property type="nucleotide sequence ID" value="NZ_RSCN01000013.1"/>
</dbReference>
<dbReference type="SMR" id="Q8YWC2"/>
<dbReference type="STRING" id="103690.gene:10493710"/>
<dbReference type="KEGG" id="ana:all1693"/>
<dbReference type="eggNOG" id="COG0240">
    <property type="taxonomic scope" value="Bacteria"/>
</dbReference>
<dbReference type="OrthoDB" id="9812273at2"/>
<dbReference type="UniPathway" id="UPA00940"/>
<dbReference type="Proteomes" id="UP000002483">
    <property type="component" value="Chromosome"/>
</dbReference>
<dbReference type="GO" id="GO:0005829">
    <property type="term" value="C:cytosol"/>
    <property type="evidence" value="ECO:0007669"/>
    <property type="project" value="TreeGrafter"/>
</dbReference>
<dbReference type="GO" id="GO:0047952">
    <property type="term" value="F:glycerol-3-phosphate dehydrogenase [NAD(P)+] activity"/>
    <property type="evidence" value="ECO:0007669"/>
    <property type="project" value="UniProtKB-UniRule"/>
</dbReference>
<dbReference type="GO" id="GO:0051287">
    <property type="term" value="F:NAD binding"/>
    <property type="evidence" value="ECO:0007669"/>
    <property type="project" value="InterPro"/>
</dbReference>
<dbReference type="GO" id="GO:0005975">
    <property type="term" value="P:carbohydrate metabolic process"/>
    <property type="evidence" value="ECO:0007669"/>
    <property type="project" value="InterPro"/>
</dbReference>
<dbReference type="GO" id="GO:0046167">
    <property type="term" value="P:glycerol-3-phosphate biosynthetic process"/>
    <property type="evidence" value="ECO:0007669"/>
    <property type="project" value="UniProtKB-UniRule"/>
</dbReference>
<dbReference type="GO" id="GO:0046168">
    <property type="term" value="P:glycerol-3-phosphate catabolic process"/>
    <property type="evidence" value="ECO:0007669"/>
    <property type="project" value="InterPro"/>
</dbReference>
<dbReference type="GO" id="GO:0006650">
    <property type="term" value="P:glycerophospholipid metabolic process"/>
    <property type="evidence" value="ECO:0007669"/>
    <property type="project" value="UniProtKB-UniRule"/>
</dbReference>
<dbReference type="GO" id="GO:0008654">
    <property type="term" value="P:phospholipid biosynthetic process"/>
    <property type="evidence" value="ECO:0007669"/>
    <property type="project" value="UniProtKB-KW"/>
</dbReference>
<dbReference type="FunFam" id="1.10.1040.10:FF:000001">
    <property type="entry name" value="Glycerol-3-phosphate dehydrogenase [NAD(P)+]"/>
    <property type="match status" value="1"/>
</dbReference>
<dbReference type="FunFam" id="3.40.50.720:FF:001174">
    <property type="entry name" value="Glycerol-3-phosphate dehydrogenase [NAD(P)+]"/>
    <property type="match status" value="1"/>
</dbReference>
<dbReference type="Gene3D" id="1.10.1040.10">
    <property type="entry name" value="N-(1-d-carboxylethyl)-l-norvaline Dehydrogenase, domain 2"/>
    <property type="match status" value="1"/>
</dbReference>
<dbReference type="Gene3D" id="3.40.50.720">
    <property type="entry name" value="NAD(P)-binding Rossmann-like Domain"/>
    <property type="match status" value="2"/>
</dbReference>
<dbReference type="HAMAP" id="MF_00394">
    <property type="entry name" value="NAD_Glyc3P_dehydrog"/>
    <property type="match status" value="1"/>
</dbReference>
<dbReference type="InterPro" id="IPR008927">
    <property type="entry name" value="6-PGluconate_DH-like_C_sf"/>
</dbReference>
<dbReference type="InterPro" id="IPR013328">
    <property type="entry name" value="6PGD_dom2"/>
</dbReference>
<dbReference type="InterPro" id="IPR006168">
    <property type="entry name" value="G3P_DH_NAD-dep"/>
</dbReference>
<dbReference type="InterPro" id="IPR006109">
    <property type="entry name" value="G3P_DH_NAD-dep_C"/>
</dbReference>
<dbReference type="InterPro" id="IPR011128">
    <property type="entry name" value="G3P_DH_NAD-dep_N"/>
</dbReference>
<dbReference type="InterPro" id="IPR036291">
    <property type="entry name" value="NAD(P)-bd_dom_sf"/>
</dbReference>
<dbReference type="NCBIfam" id="NF000940">
    <property type="entry name" value="PRK00094.1-2"/>
    <property type="match status" value="1"/>
</dbReference>
<dbReference type="NCBIfam" id="NF000942">
    <property type="entry name" value="PRK00094.1-4"/>
    <property type="match status" value="1"/>
</dbReference>
<dbReference type="NCBIfam" id="NF011212">
    <property type="entry name" value="PRK14619.1"/>
    <property type="match status" value="1"/>
</dbReference>
<dbReference type="PANTHER" id="PTHR11728">
    <property type="entry name" value="GLYCEROL-3-PHOSPHATE DEHYDROGENASE"/>
    <property type="match status" value="1"/>
</dbReference>
<dbReference type="PANTHER" id="PTHR11728:SF1">
    <property type="entry name" value="GLYCEROL-3-PHOSPHATE DEHYDROGENASE [NAD(+)] 2, CHLOROPLASTIC"/>
    <property type="match status" value="1"/>
</dbReference>
<dbReference type="Pfam" id="PF07479">
    <property type="entry name" value="NAD_Gly3P_dh_C"/>
    <property type="match status" value="1"/>
</dbReference>
<dbReference type="Pfam" id="PF01210">
    <property type="entry name" value="NAD_Gly3P_dh_N"/>
    <property type="match status" value="2"/>
</dbReference>
<dbReference type="PIRSF" id="PIRSF000114">
    <property type="entry name" value="Glycerol-3-P_dh"/>
    <property type="match status" value="1"/>
</dbReference>
<dbReference type="SUPFAM" id="SSF48179">
    <property type="entry name" value="6-phosphogluconate dehydrogenase C-terminal domain-like"/>
    <property type="match status" value="1"/>
</dbReference>
<dbReference type="SUPFAM" id="SSF51735">
    <property type="entry name" value="NAD(P)-binding Rossmann-fold domains"/>
    <property type="match status" value="1"/>
</dbReference>
<dbReference type="PROSITE" id="PS00957">
    <property type="entry name" value="NAD_G3PDH"/>
    <property type="match status" value="1"/>
</dbReference>
<comment type="function">
    <text evidence="1">Catalyzes the reduction of the glycolytic intermediate dihydroxyacetone phosphate (DHAP) to sn-glycerol 3-phosphate (G3P), the key precursor for phospholipid synthesis.</text>
</comment>
<comment type="catalytic activity">
    <reaction evidence="1">
        <text>sn-glycerol 3-phosphate + NAD(+) = dihydroxyacetone phosphate + NADH + H(+)</text>
        <dbReference type="Rhea" id="RHEA:11092"/>
        <dbReference type="ChEBI" id="CHEBI:15378"/>
        <dbReference type="ChEBI" id="CHEBI:57540"/>
        <dbReference type="ChEBI" id="CHEBI:57597"/>
        <dbReference type="ChEBI" id="CHEBI:57642"/>
        <dbReference type="ChEBI" id="CHEBI:57945"/>
        <dbReference type="EC" id="1.1.1.94"/>
    </reaction>
    <physiologicalReaction direction="right-to-left" evidence="1">
        <dbReference type="Rhea" id="RHEA:11094"/>
    </physiologicalReaction>
</comment>
<comment type="catalytic activity">
    <reaction evidence="1">
        <text>sn-glycerol 3-phosphate + NADP(+) = dihydroxyacetone phosphate + NADPH + H(+)</text>
        <dbReference type="Rhea" id="RHEA:11096"/>
        <dbReference type="ChEBI" id="CHEBI:15378"/>
        <dbReference type="ChEBI" id="CHEBI:57597"/>
        <dbReference type="ChEBI" id="CHEBI:57642"/>
        <dbReference type="ChEBI" id="CHEBI:57783"/>
        <dbReference type="ChEBI" id="CHEBI:58349"/>
        <dbReference type="EC" id="1.1.1.94"/>
    </reaction>
    <physiologicalReaction direction="right-to-left" evidence="1">
        <dbReference type="Rhea" id="RHEA:11098"/>
    </physiologicalReaction>
</comment>
<comment type="pathway">
    <text evidence="1">Membrane lipid metabolism; glycerophospholipid metabolism.</text>
</comment>
<comment type="subcellular location">
    <subcellularLocation>
        <location evidence="1">Cytoplasm</location>
    </subcellularLocation>
</comment>
<comment type="similarity">
    <text evidence="1">Belongs to the NAD-dependent glycerol-3-phosphate dehydrogenase family.</text>
</comment>
<protein>
    <recommendedName>
        <fullName evidence="1">Glycerol-3-phosphate dehydrogenase [NAD(P)+]</fullName>
        <ecNumber evidence="1">1.1.1.94</ecNumber>
    </recommendedName>
    <alternativeName>
        <fullName evidence="1">NAD(P)(+)-dependent glycerol-3-phosphate dehydrogenase</fullName>
    </alternativeName>
    <alternativeName>
        <fullName evidence="1">NAD(P)H-dependent dihydroxyacetone-phosphate reductase</fullName>
    </alternativeName>
</protein>
<accession>Q8YWC2</accession>
<sequence>MQETTISILGAGAWGASLANLAIANGNRVRVWSRRGSETLSAVLQGADIVLSAISMKGVREVASQIQSLTPSPETIFVTATKGLEPETIYTPSQIWQSCFPHHPVVVLSGPNLSKEIDQSLPAATVVASRVATAAATVQLAFSSSRFRVYTNPDPVGVELGGTLKNVIAIASGVCDGLHLGTNAKAALVTRGLTEMVRIGNCWGAKTETFYGLSGLGDLLATCNSPLSRNYQVGYQLAGGETLAQILAKLPGTAEGVNTCQVLVQLARQQNIVIPITEQVYRLLQGEVTPQQALDELMLRDIKPEYN</sequence>
<keyword id="KW-0963">Cytoplasm</keyword>
<keyword id="KW-0444">Lipid biosynthesis</keyword>
<keyword id="KW-0443">Lipid metabolism</keyword>
<keyword id="KW-0520">NAD</keyword>
<keyword id="KW-0521">NADP</keyword>
<keyword id="KW-0547">Nucleotide-binding</keyword>
<keyword id="KW-0560">Oxidoreductase</keyword>
<keyword id="KW-0594">Phospholipid biosynthesis</keyword>
<keyword id="KW-1208">Phospholipid metabolism</keyword>
<keyword id="KW-1185">Reference proteome</keyword>
<evidence type="ECO:0000255" key="1">
    <source>
        <dbReference type="HAMAP-Rule" id="MF_00394"/>
    </source>
</evidence>
<proteinExistence type="inferred from homology"/>
<feature type="chain" id="PRO_0000137917" description="Glycerol-3-phosphate dehydrogenase [NAD(P)+]">
    <location>
        <begin position="1"/>
        <end position="307"/>
    </location>
</feature>
<feature type="active site" description="Proton acceptor" evidence="1">
    <location>
        <position position="165"/>
    </location>
</feature>
<feature type="binding site" evidence="1">
    <location>
        <position position="14"/>
    </location>
    <ligand>
        <name>NADPH</name>
        <dbReference type="ChEBI" id="CHEBI:57783"/>
    </ligand>
</feature>
<feature type="binding site" evidence="1">
    <location>
        <position position="34"/>
    </location>
    <ligand>
        <name>NADPH</name>
        <dbReference type="ChEBI" id="CHEBI:57783"/>
    </ligand>
</feature>
<feature type="binding site" evidence="1">
    <location>
        <position position="35"/>
    </location>
    <ligand>
        <name>NADPH</name>
        <dbReference type="ChEBI" id="CHEBI:57783"/>
    </ligand>
</feature>
<feature type="binding site" evidence="1">
    <location>
        <position position="82"/>
    </location>
    <ligand>
        <name>NADPH</name>
        <dbReference type="ChEBI" id="CHEBI:57783"/>
    </ligand>
</feature>
<feature type="binding site" evidence="1">
    <location>
        <position position="82"/>
    </location>
    <ligand>
        <name>sn-glycerol 3-phosphate</name>
        <dbReference type="ChEBI" id="CHEBI:57597"/>
    </ligand>
</feature>
<feature type="binding site" evidence="1">
    <location>
        <position position="110"/>
    </location>
    <ligand>
        <name>sn-glycerol 3-phosphate</name>
        <dbReference type="ChEBI" id="CHEBI:57597"/>
    </ligand>
</feature>
<feature type="binding site" evidence="1">
    <location>
        <position position="114"/>
    </location>
    <ligand>
        <name>NADPH</name>
        <dbReference type="ChEBI" id="CHEBI:57783"/>
    </ligand>
</feature>
<feature type="binding site" evidence="1">
    <location>
        <position position="165"/>
    </location>
    <ligand>
        <name>sn-glycerol 3-phosphate</name>
        <dbReference type="ChEBI" id="CHEBI:57597"/>
    </ligand>
</feature>
<feature type="binding site" evidence="1">
    <location>
        <position position="218"/>
    </location>
    <ligand>
        <name>sn-glycerol 3-phosphate</name>
        <dbReference type="ChEBI" id="CHEBI:57597"/>
    </ligand>
</feature>
<feature type="binding site" evidence="1">
    <location>
        <position position="228"/>
    </location>
    <ligand>
        <name>sn-glycerol 3-phosphate</name>
        <dbReference type="ChEBI" id="CHEBI:57597"/>
    </ligand>
</feature>
<feature type="binding site" evidence="1">
    <location>
        <position position="229"/>
    </location>
    <ligand>
        <name>NADPH</name>
        <dbReference type="ChEBI" id="CHEBI:57783"/>
    </ligand>
</feature>
<feature type="binding site" evidence="1">
    <location>
        <position position="229"/>
    </location>
    <ligand>
        <name>sn-glycerol 3-phosphate</name>
        <dbReference type="ChEBI" id="CHEBI:57597"/>
    </ligand>
</feature>
<feature type="binding site" evidence="1">
    <location>
        <position position="230"/>
    </location>
    <ligand>
        <name>sn-glycerol 3-phosphate</name>
        <dbReference type="ChEBI" id="CHEBI:57597"/>
    </ligand>
</feature>
<feature type="binding site" evidence="1">
    <location>
        <position position="255"/>
    </location>
    <ligand>
        <name>NADPH</name>
        <dbReference type="ChEBI" id="CHEBI:57783"/>
    </ligand>
</feature>
<name>GPDA_NOSS1</name>
<gene>
    <name evidence="1" type="primary">gpsA</name>
    <name type="ordered locus">all1693</name>
</gene>
<reference key="1">
    <citation type="journal article" date="2001" name="DNA Res.">
        <title>Complete genomic sequence of the filamentous nitrogen-fixing cyanobacterium Anabaena sp. strain PCC 7120.</title>
        <authorList>
            <person name="Kaneko T."/>
            <person name="Nakamura Y."/>
            <person name="Wolk C.P."/>
            <person name="Kuritz T."/>
            <person name="Sasamoto S."/>
            <person name="Watanabe A."/>
            <person name="Iriguchi M."/>
            <person name="Ishikawa A."/>
            <person name="Kawashima K."/>
            <person name="Kimura T."/>
            <person name="Kishida Y."/>
            <person name="Kohara M."/>
            <person name="Matsumoto M."/>
            <person name="Matsuno A."/>
            <person name="Muraki A."/>
            <person name="Nakazaki N."/>
            <person name="Shimpo S."/>
            <person name="Sugimoto M."/>
            <person name="Takazawa M."/>
            <person name="Yamada M."/>
            <person name="Yasuda M."/>
            <person name="Tabata S."/>
        </authorList>
    </citation>
    <scope>NUCLEOTIDE SEQUENCE [LARGE SCALE GENOMIC DNA]</scope>
    <source>
        <strain>PCC 7120 / SAG 25.82 / UTEX 2576</strain>
    </source>
</reference>